<sequence>MAEEEVGNSQRQSEEIEAMAAIYGEEWCVIDENAKIFCIRVTDFMDDPKWTLCLQVMLPSEYPGTAPPSYQLNAPWLKGQERADLSNSLEEIYVHNMGESILYQWVEKIRDALIQKSQITEPDPDVKKKTEEVEVESEEDPILEHPPENPVKTLDLKISEETQPETEELPPVAHGVPITDRRSTFQAHVAPVVCPEQVKLVLAKLYENKKIASATHNIYAYRIFCEDKQTFLQDCEDDGETAAGGRLLHLMEILNVKNVMVVVSRWYGGILLGPDRFKHINNCARNILVEKNFTNTPDESTKNLGKKKVKKDKKKNDH</sequence>
<feature type="chain" id="PRO_0000330851" description="Protein IMPACT">
    <location>
        <begin position="1"/>
        <end position="318"/>
    </location>
</feature>
<feature type="domain" description="RWD" evidence="1">
    <location>
        <begin position="14"/>
        <end position="116"/>
    </location>
</feature>
<feature type="region of interest" description="Disordered" evidence="2">
    <location>
        <begin position="297"/>
        <end position="318"/>
    </location>
</feature>
<feature type="compositionally biased region" description="Basic residues" evidence="2">
    <location>
        <begin position="304"/>
        <end position="318"/>
    </location>
</feature>
<feature type="modified residue" description="Phosphoserine" evidence="11 12">
    <location>
        <position position="137"/>
    </location>
</feature>
<feature type="sequence conflict" description="In Ref. 2; AAG23916." evidence="9" ref="2">
    <original>N</original>
    <variation>S</variation>
    <location>
        <position position="303"/>
    </location>
</feature>
<reference key="1">
    <citation type="journal article" date="1997" name="Proc. Natl. Acad. Sci. U.S.A.">
        <title>Screening for imprinted genes by allelic message display: identification of a paternally expressed gene impact on mouse chromosome 18.</title>
        <authorList>
            <person name="Hagiwara Y."/>
            <person name="Hirai M."/>
            <person name="Nishiyama K."/>
            <person name="Kanazawa I."/>
            <person name="Ueda T."/>
            <person name="Sakaki Y."/>
            <person name="Ito T."/>
        </authorList>
    </citation>
    <scope>NUCLEOTIDE SEQUENCE [MRNA]</scope>
    <scope>IMPRINTING</scope>
    <scope>TISSUE SPECIFICITY</scope>
    <scope>DEVELOPMENTAL STAGE</scope>
    <source>
        <strain>C57BL/6J</strain>
    </source>
</reference>
<reference key="2">
    <citation type="journal article" date="2000" name="Genome Res.">
        <title>Comparative genome analysis of the mouse imprinted gene impact and its nonimprinted human homolog IMPACT: toward the structural basis for species-specific imprinting.</title>
        <authorList>
            <person name="Okamura K."/>
            <person name="Hagiwara-Takeuchi Y."/>
            <person name="Li T."/>
            <person name="Vu T.H."/>
            <person name="Hirai M."/>
            <person name="Hattori M."/>
            <person name="Sakaki Y."/>
            <person name="Hoffman A.R."/>
            <person name="Ito T."/>
        </authorList>
    </citation>
    <scope>NUCLEOTIDE SEQUENCE [GENOMIC DNA]</scope>
    <scope>IMPRINTING</scope>
    <source>
        <strain>129/Sv</strain>
    </source>
</reference>
<reference key="3">
    <citation type="journal article" date="2004" name="Genome Res.">
        <title>The status, quality, and expansion of the NIH full-length cDNA project: the Mammalian Gene Collection (MGC).</title>
        <authorList>
            <consortium name="The MGC Project Team"/>
        </authorList>
    </citation>
    <scope>NUCLEOTIDE SEQUENCE [LARGE SCALE MRNA]</scope>
    <source>
        <strain>FVB/N</strain>
        <tissue>Kidney</tissue>
    </source>
</reference>
<reference key="4">
    <citation type="journal article" date="2005" name="Science">
        <title>The transcriptional landscape of the mammalian genome.</title>
        <authorList>
            <person name="Carninci P."/>
            <person name="Kasukawa T."/>
            <person name="Katayama S."/>
            <person name="Gough J."/>
            <person name="Frith M.C."/>
            <person name="Maeda N."/>
            <person name="Oyama R."/>
            <person name="Ravasi T."/>
            <person name="Lenhard B."/>
            <person name="Wells C."/>
            <person name="Kodzius R."/>
            <person name="Shimokawa K."/>
            <person name="Bajic V.B."/>
            <person name="Brenner S.E."/>
            <person name="Batalov S."/>
            <person name="Forrest A.R."/>
            <person name="Zavolan M."/>
            <person name="Davis M.J."/>
            <person name="Wilming L.G."/>
            <person name="Aidinis V."/>
            <person name="Allen J.E."/>
            <person name="Ambesi-Impiombato A."/>
            <person name="Apweiler R."/>
            <person name="Aturaliya R.N."/>
            <person name="Bailey T.L."/>
            <person name="Bansal M."/>
            <person name="Baxter L."/>
            <person name="Beisel K.W."/>
            <person name="Bersano T."/>
            <person name="Bono H."/>
            <person name="Chalk A.M."/>
            <person name="Chiu K.P."/>
            <person name="Choudhary V."/>
            <person name="Christoffels A."/>
            <person name="Clutterbuck D.R."/>
            <person name="Crowe M.L."/>
            <person name="Dalla E."/>
            <person name="Dalrymple B.P."/>
            <person name="de Bono B."/>
            <person name="Della Gatta G."/>
            <person name="di Bernardo D."/>
            <person name="Down T."/>
            <person name="Engstrom P."/>
            <person name="Fagiolini M."/>
            <person name="Faulkner G."/>
            <person name="Fletcher C.F."/>
            <person name="Fukushima T."/>
            <person name="Furuno M."/>
            <person name="Futaki S."/>
            <person name="Gariboldi M."/>
            <person name="Georgii-Hemming P."/>
            <person name="Gingeras T.R."/>
            <person name="Gojobori T."/>
            <person name="Green R.E."/>
            <person name="Gustincich S."/>
            <person name="Harbers M."/>
            <person name="Hayashi Y."/>
            <person name="Hensch T.K."/>
            <person name="Hirokawa N."/>
            <person name="Hill D."/>
            <person name="Huminiecki L."/>
            <person name="Iacono M."/>
            <person name="Ikeo K."/>
            <person name="Iwama A."/>
            <person name="Ishikawa T."/>
            <person name="Jakt M."/>
            <person name="Kanapin A."/>
            <person name="Katoh M."/>
            <person name="Kawasawa Y."/>
            <person name="Kelso J."/>
            <person name="Kitamura H."/>
            <person name="Kitano H."/>
            <person name="Kollias G."/>
            <person name="Krishnan S.P."/>
            <person name="Kruger A."/>
            <person name="Kummerfeld S.K."/>
            <person name="Kurochkin I.V."/>
            <person name="Lareau L.F."/>
            <person name="Lazarevic D."/>
            <person name="Lipovich L."/>
            <person name="Liu J."/>
            <person name="Liuni S."/>
            <person name="McWilliam S."/>
            <person name="Madan Babu M."/>
            <person name="Madera M."/>
            <person name="Marchionni L."/>
            <person name="Matsuda H."/>
            <person name="Matsuzawa S."/>
            <person name="Miki H."/>
            <person name="Mignone F."/>
            <person name="Miyake S."/>
            <person name="Morris K."/>
            <person name="Mottagui-Tabar S."/>
            <person name="Mulder N."/>
            <person name="Nakano N."/>
            <person name="Nakauchi H."/>
            <person name="Ng P."/>
            <person name="Nilsson R."/>
            <person name="Nishiguchi S."/>
            <person name="Nishikawa S."/>
            <person name="Nori F."/>
            <person name="Ohara O."/>
            <person name="Okazaki Y."/>
            <person name="Orlando V."/>
            <person name="Pang K.C."/>
            <person name="Pavan W.J."/>
            <person name="Pavesi G."/>
            <person name="Pesole G."/>
            <person name="Petrovsky N."/>
            <person name="Piazza S."/>
            <person name="Reed J."/>
            <person name="Reid J.F."/>
            <person name="Ring B.Z."/>
            <person name="Ringwald M."/>
            <person name="Rost B."/>
            <person name="Ruan Y."/>
            <person name="Salzberg S.L."/>
            <person name="Sandelin A."/>
            <person name="Schneider C."/>
            <person name="Schoenbach C."/>
            <person name="Sekiguchi K."/>
            <person name="Semple C.A."/>
            <person name="Seno S."/>
            <person name="Sessa L."/>
            <person name="Sheng Y."/>
            <person name="Shibata Y."/>
            <person name="Shimada H."/>
            <person name="Shimada K."/>
            <person name="Silva D."/>
            <person name="Sinclair B."/>
            <person name="Sperling S."/>
            <person name="Stupka E."/>
            <person name="Sugiura K."/>
            <person name="Sultana R."/>
            <person name="Takenaka Y."/>
            <person name="Taki K."/>
            <person name="Tammoja K."/>
            <person name="Tan S.L."/>
            <person name="Tang S."/>
            <person name="Taylor M.S."/>
            <person name="Tegner J."/>
            <person name="Teichmann S.A."/>
            <person name="Ueda H.R."/>
            <person name="van Nimwegen E."/>
            <person name="Verardo R."/>
            <person name="Wei C.L."/>
            <person name="Yagi K."/>
            <person name="Yamanishi H."/>
            <person name="Zabarovsky E."/>
            <person name="Zhu S."/>
            <person name="Zimmer A."/>
            <person name="Hide W."/>
            <person name="Bult C."/>
            <person name="Grimmond S.M."/>
            <person name="Teasdale R.D."/>
            <person name="Liu E.T."/>
            <person name="Brusic V."/>
            <person name="Quackenbush J."/>
            <person name="Wahlestedt C."/>
            <person name="Mattick J.S."/>
            <person name="Hume D.A."/>
            <person name="Kai C."/>
            <person name="Sasaki D."/>
            <person name="Tomaru Y."/>
            <person name="Fukuda S."/>
            <person name="Kanamori-Katayama M."/>
            <person name="Suzuki M."/>
            <person name="Aoki J."/>
            <person name="Arakawa T."/>
            <person name="Iida J."/>
            <person name="Imamura K."/>
            <person name="Itoh M."/>
            <person name="Kato T."/>
            <person name="Kawaji H."/>
            <person name="Kawagashira N."/>
            <person name="Kawashima T."/>
            <person name="Kojima M."/>
            <person name="Kondo S."/>
            <person name="Konno H."/>
            <person name="Nakano K."/>
            <person name="Ninomiya N."/>
            <person name="Nishio T."/>
            <person name="Okada M."/>
            <person name="Plessy C."/>
            <person name="Shibata K."/>
            <person name="Shiraki T."/>
            <person name="Suzuki S."/>
            <person name="Tagami M."/>
            <person name="Waki K."/>
            <person name="Watahiki A."/>
            <person name="Okamura-Oho Y."/>
            <person name="Suzuki H."/>
            <person name="Kawai J."/>
            <person name="Hayashizaki Y."/>
        </authorList>
    </citation>
    <scope>NUCLEOTIDE SEQUENCE [LARGE SCALE MRNA] OF 1-305</scope>
    <source>
        <strain>C57BL/6J</strain>
        <tissue>Hypothalamus</tissue>
    </source>
</reference>
<reference key="5">
    <citation type="journal article" date="2004" name="DNA Res.">
        <title>An evolutionary scenario for genomic imprinting of Impact lying between nonimprinted neighbors.</title>
        <authorList>
            <person name="Okamura K."/>
            <person name="Yamada Y."/>
            <person name="Sakaki Y."/>
            <person name="Ito T."/>
        </authorList>
    </citation>
    <scope>IMPRINTING</scope>
</reference>
<reference key="6">
    <citation type="journal article" date="2005" name="J. Biol. Chem.">
        <title>IMPACT, a protein preferentially expressed in the mouse brain, binds GCN1 and inhibits GCN2 activation.</title>
        <authorList>
            <person name="Pereira C.M."/>
            <person name="Sattlegger E."/>
            <person name="Jiang H.-Y."/>
            <person name="Longo B.M."/>
            <person name="Jaqueta C.B."/>
            <person name="Hinnebusch A.G."/>
            <person name="Wek R.C."/>
            <person name="Mello L.E.A.M."/>
            <person name="Castilho B.A."/>
        </authorList>
    </citation>
    <scope>FUNCTION</scope>
    <scope>INTERACTION WITH GCN1</scope>
    <scope>TISSUE SPECIFICITY</scope>
</reference>
<reference key="7">
    <citation type="journal article" date="2008" name="J. Comp. Neurol.">
        <title>Distribution of the protein IMPACT, an inhibitor of GCN2, in the mouse, rat, and marmoset brain.</title>
        <authorList>
            <person name="Bittencourt S."/>
            <person name="Pereira C.M."/>
            <person name="Avedissian M."/>
            <person name="Delamano A."/>
            <person name="Mello L.E.A.M."/>
            <person name="Castilho B.A."/>
        </authorList>
    </citation>
    <scope>TISSUE SPECIFICITY</scope>
</reference>
<reference key="8">
    <citation type="journal article" date="2009" name="Mol. Cell. Proteomics">
        <title>Large scale localization of protein phosphorylation by use of electron capture dissociation mass spectrometry.</title>
        <authorList>
            <person name="Sweet S.M."/>
            <person name="Bailey C.M."/>
            <person name="Cunningham D.L."/>
            <person name="Heath J.K."/>
            <person name="Cooper H.J."/>
        </authorList>
    </citation>
    <scope>PHOSPHORYLATION [LARGE SCALE ANALYSIS] AT SER-137</scope>
    <scope>IDENTIFICATION BY MASS SPECTROMETRY [LARGE SCALE ANALYSIS]</scope>
    <source>
        <tissue>Embryonic fibroblast</tissue>
    </source>
</reference>
<reference key="9">
    <citation type="journal article" date="2010" name="Cell">
        <title>A tissue-specific atlas of mouse protein phosphorylation and expression.</title>
        <authorList>
            <person name="Huttlin E.L."/>
            <person name="Jedrychowski M.P."/>
            <person name="Elias J.E."/>
            <person name="Goswami T."/>
            <person name="Rad R."/>
            <person name="Beausoleil S.A."/>
            <person name="Villen J."/>
            <person name="Haas W."/>
            <person name="Sowa M.E."/>
            <person name="Gygi S.P."/>
        </authorList>
    </citation>
    <scope>PHOSPHORYLATION [LARGE SCALE ANALYSIS] AT SER-137</scope>
    <scope>IDENTIFICATION BY MASS SPECTROMETRY [LARGE SCALE ANALYSIS]</scope>
    <source>
        <tissue>Brain</tissue>
        <tissue>Kidney</tissue>
        <tissue>Spleen</tissue>
    </source>
</reference>
<reference key="10">
    <citation type="journal article" date="2012" name="FEBS J.">
        <title>Evidence that Yih1 resides in a complex with ribosomes.</title>
        <authorList>
            <person name="Waller T."/>
            <person name="Lee S.J."/>
            <person name="Sattlegger E."/>
        </authorList>
    </citation>
    <scope>INTERACTION WITH GCN1 AND RPL39</scope>
    <scope>ASSOCIATION WITH ACTIN AND RIBOSOMES</scope>
</reference>
<reference key="11">
    <citation type="journal article" date="2013" name="J. Biol. Chem.">
        <title>IMPACT is a developmentally regulated protein in neurons that opposes the eukaryotic initiation factor 2alpha kinase GCN2 in the modulation of neurite outgrowth.</title>
        <authorList>
            <person name="Roffe M."/>
            <person name="Hajj G.N."/>
            <person name="Azevedo H.F."/>
            <person name="Alves V.S."/>
            <person name="Castilho B.A."/>
        </authorList>
    </citation>
    <scope>FUNCTION</scope>
    <scope>SUBCELLULAR LOCATION</scope>
    <scope>DEVELOPMENTAL STAGE</scope>
    <scope>INDUCTION</scope>
</reference>
<reference key="12">
    <citation type="journal article" date="2014" name="Biochem. Biophys. Res. Commun.">
        <title>Evolutionarily conserved IMPACT impairs various stress responses that require GCN1 for activating the eIF2 kinase GCN2.</title>
        <authorList>
            <person name="Cambiaghi T.D."/>
            <person name="Pereira C.M."/>
            <person name="Shanmugam R."/>
            <person name="Bolech M."/>
            <person name="Wek R.C."/>
            <person name="Sattlegger E."/>
            <person name="Castilho B.A."/>
        </authorList>
    </citation>
    <scope>FUNCTION</scope>
</reference>
<comment type="function">
    <text evidence="3 6 7">Translational regulator that ensures constant high levels of translation upon a variety of stress conditions, such as amino acid starvation, UV-C irradiation, proteasome inhibitor treatment and glucose deprivation. Plays a role as a negative regulator of the EIF2AK4/GCN2 kinase activity; impairs GCN1-mediated EIF2AK4/GCN2 activation, and hence EIF2AK4/GCN2-mediated eIF-2-alpha phosphorylation and subsequent down-regulation of protein synthesis (PubMed:15937339, PubMed:23447528, PubMed:24333428). May be required to regulate translation in specific neuronal cells under amino acid starvation conditions by preventing GCN2 activation and therefore ATF4 synthesis (PubMed:15937339, PubMed:23447528). Through its inhibitory action on EIF2AK4/GCN2, plays a role in differentiation of neuronal cells by stimulating neurite outgrowth (PubMed:23447528).</text>
</comment>
<comment type="subunit">
    <text evidence="3 5">Interacts with GCN1; prevents the interaction of GCN1 with EIF2AK4/GCN2 and inhibits EIF2AK4/GCN2 kinase activity (PubMed:15937339, PubMed:22404850). Interaction with RPL39; this interaction occurs in a GCN1-independent manner (PubMed:22404850). Associates with ribosomes; this interaction occurs in a GCN1-independent manner (PubMed:22404850). Associates with actin; this interaction occurs in a GCN1-independent manner (PubMed:22404850).</text>
</comment>
<comment type="subcellular location">
    <subcellularLocation>
        <location evidence="10">Cytoplasm</location>
    </subcellularLocation>
</comment>
<comment type="tissue specificity">
    <text evidence="3 4 8">Present in neurons in most areas of the brain. Present at high level in hypothalamus, particularly in the suprachiasmatic nucleus (at protein level) (PubMed:15937339, PubMed:18260151). Preferentially expressed in brain, with a weaker expression in other tissues (PubMed:9256468).</text>
</comment>
<comment type="developmental stage">
    <text evidence="6 8">Detected in embryos at 7, 11, 15, and 17 dpc. At 16 dpc, predominantly expressed in the central nervous system (at protein level). Strongly up-regulated during brain development from 17 dpc up to at least postnatal days 14 (at protein level). In N2a neuroblastoma cell line model and in primary cultures of hippocampal neurons, up-regulated during neuronal differentiation induced by serum reduction (at protein level).</text>
</comment>
<comment type="induction">
    <text evidence="6">Up-regulated after serum withdrawal during neuronal differentiation (PubMed:23447528).</text>
</comment>
<comment type="miscellaneous">
    <text>The Impact locus is imprinted. Paternal inherited gene is expressed, while the maternal inherited gene is silenced. In contrast with most imprinted genes, neighboring genes are apparently not imprinted.</text>
</comment>
<comment type="similarity">
    <text evidence="9">Belongs to the IMPACT family.</text>
</comment>
<protein>
    <recommendedName>
        <fullName>Protein IMPACT</fullName>
    </recommendedName>
    <alternativeName>
        <fullName>Imprinted and ancient gene protein</fullName>
    </alternativeName>
</protein>
<keyword id="KW-0009">Actin-binding</keyword>
<keyword id="KW-0963">Cytoplasm</keyword>
<keyword id="KW-0221">Differentiation</keyword>
<keyword id="KW-0524">Neurogenesis</keyword>
<keyword id="KW-0597">Phosphoprotein</keyword>
<keyword id="KW-1185">Reference proteome</keyword>
<keyword id="KW-0678">Repressor</keyword>
<keyword id="KW-0346">Stress response</keyword>
<keyword id="KW-0810">Translation regulation</keyword>
<accession>O55091</accession>
<accession>Q3UUR6</accession>
<accession>Q9EQH0</accession>
<gene>
    <name type="primary">Impact</name>
</gene>
<proteinExistence type="evidence at protein level"/>
<name>IMPCT_MOUSE</name>
<dbReference type="EMBL" id="D87973">
    <property type="protein sequence ID" value="BAA35139.1"/>
    <property type="molecule type" value="mRNA"/>
</dbReference>
<dbReference type="EMBL" id="AF232228">
    <property type="protein sequence ID" value="AAG23916.1"/>
    <property type="molecule type" value="Genomic_DNA"/>
</dbReference>
<dbReference type="EMBL" id="BC020524">
    <property type="protein sequence ID" value="AAH20524.1"/>
    <property type="molecule type" value="mRNA"/>
</dbReference>
<dbReference type="EMBL" id="AK138136">
    <property type="protein sequence ID" value="BAE23558.1"/>
    <property type="molecule type" value="mRNA"/>
</dbReference>
<dbReference type="CCDS" id="CCDS29068.1"/>
<dbReference type="RefSeq" id="NP_032404.1">
    <property type="nucleotide sequence ID" value="NM_008378.3"/>
</dbReference>
<dbReference type="SMR" id="O55091"/>
<dbReference type="BioGRID" id="200653">
    <property type="interactions" value="8"/>
</dbReference>
<dbReference type="FunCoup" id="O55091">
    <property type="interactions" value="1478"/>
</dbReference>
<dbReference type="IntAct" id="O55091">
    <property type="interactions" value="2"/>
</dbReference>
<dbReference type="MINT" id="O55091"/>
<dbReference type="STRING" id="10090.ENSMUSP00000025290"/>
<dbReference type="ChEMBL" id="CHEMBL4879415"/>
<dbReference type="GlyGen" id="O55091">
    <property type="glycosylation" value="1 site, 1 O-linked glycan (1 site)"/>
</dbReference>
<dbReference type="iPTMnet" id="O55091"/>
<dbReference type="PhosphoSitePlus" id="O55091"/>
<dbReference type="SwissPalm" id="O55091"/>
<dbReference type="jPOST" id="O55091"/>
<dbReference type="PaxDb" id="10090-ENSMUSP00000025290"/>
<dbReference type="PeptideAtlas" id="O55091"/>
<dbReference type="ProteomicsDB" id="301651"/>
<dbReference type="Pumba" id="O55091"/>
<dbReference type="Antibodypedia" id="22092">
    <property type="antibodies" value="114 antibodies from 19 providers"/>
</dbReference>
<dbReference type="DNASU" id="16210"/>
<dbReference type="Ensembl" id="ENSMUST00000025290.7">
    <property type="protein sequence ID" value="ENSMUSP00000025290.6"/>
    <property type="gene ID" value="ENSMUSG00000024423.7"/>
</dbReference>
<dbReference type="GeneID" id="16210"/>
<dbReference type="KEGG" id="mmu:16210"/>
<dbReference type="UCSC" id="uc008eda.1">
    <property type="organism name" value="mouse"/>
</dbReference>
<dbReference type="AGR" id="MGI:1098233"/>
<dbReference type="CTD" id="55364"/>
<dbReference type="MGI" id="MGI:1098233">
    <property type="gene designation" value="Impact"/>
</dbReference>
<dbReference type="VEuPathDB" id="HostDB:ENSMUSG00000024423"/>
<dbReference type="eggNOG" id="KOG3299">
    <property type="taxonomic scope" value="Eukaryota"/>
</dbReference>
<dbReference type="GeneTree" id="ENSGT00390000017571"/>
<dbReference type="HOGENOM" id="CLU_045276_1_0_1"/>
<dbReference type="InParanoid" id="O55091"/>
<dbReference type="OMA" id="FYEISAP"/>
<dbReference type="OrthoDB" id="69641at2759"/>
<dbReference type="PhylomeDB" id="O55091"/>
<dbReference type="TreeFam" id="TF314823"/>
<dbReference type="BioGRID-ORCS" id="16210">
    <property type="hits" value="2 hits in 78 CRISPR screens"/>
</dbReference>
<dbReference type="ChiTaRS" id="Impact">
    <property type="organism name" value="mouse"/>
</dbReference>
<dbReference type="PRO" id="PR:O55091"/>
<dbReference type="Proteomes" id="UP000000589">
    <property type="component" value="Chromosome 18"/>
</dbReference>
<dbReference type="RNAct" id="O55091">
    <property type="molecule type" value="protein"/>
</dbReference>
<dbReference type="Bgee" id="ENSMUSG00000024423">
    <property type="expression patterns" value="Expressed in paraventricular nucleus of hypothalamus and 256 other cell types or tissues"/>
</dbReference>
<dbReference type="ExpressionAtlas" id="O55091">
    <property type="expression patterns" value="baseline and differential"/>
</dbReference>
<dbReference type="GO" id="GO:0005737">
    <property type="term" value="C:cytoplasm"/>
    <property type="evidence" value="ECO:0000314"/>
    <property type="project" value="UniProtKB"/>
</dbReference>
<dbReference type="GO" id="GO:0005829">
    <property type="term" value="C:cytosol"/>
    <property type="evidence" value="ECO:0000304"/>
    <property type="project" value="Reactome"/>
</dbReference>
<dbReference type="GO" id="GO:0003779">
    <property type="term" value="F:actin binding"/>
    <property type="evidence" value="ECO:0000314"/>
    <property type="project" value="UniProtKB"/>
</dbReference>
<dbReference type="GO" id="GO:0140311">
    <property type="term" value="F:protein sequestering activity"/>
    <property type="evidence" value="ECO:0000314"/>
    <property type="project" value="UniProtKB"/>
</dbReference>
<dbReference type="GO" id="GO:0043022">
    <property type="term" value="F:ribosome binding"/>
    <property type="evidence" value="ECO:0000314"/>
    <property type="project" value="UniProtKB"/>
</dbReference>
<dbReference type="GO" id="GO:0034198">
    <property type="term" value="P:cellular response to amino acid starvation"/>
    <property type="evidence" value="ECO:0000314"/>
    <property type="project" value="UniProtKB"/>
</dbReference>
<dbReference type="GO" id="GO:0140469">
    <property type="term" value="P:GCN2-mediated signaling"/>
    <property type="evidence" value="ECO:0000315"/>
    <property type="project" value="UniProtKB"/>
</dbReference>
<dbReference type="GO" id="GO:0035556">
    <property type="term" value="P:intracellular signal transduction"/>
    <property type="evidence" value="ECO:0000314"/>
    <property type="project" value="UniProtKB"/>
</dbReference>
<dbReference type="GO" id="GO:0000122">
    <property type="term" value="P:negative regulation of transcription by RNA polymerase II"/>
    <property type="evidence" value="ECO:0000315"/>
    <property type="project" value="UniProtKB"/>
</dbReference>
<dbReference type="GO" id="GO:1990138">
    <property type="term" value="P:neuron projection extension"/>
    <property type="evidence" value="ECO:0000315"/>
    <property type="project" value="UniProtKB"/>
</dbReference>
<dbReference type="GO" id="GO:0045666">
    <property type="term" value="P:positive regulation of neuron differentiation"/>
    <property type="evidence" value="ECO:0000315"/>
    <property type="project" value="UniProtKB"/>
</dbReference>
<dbReference type="GO" id="GO:1990611">
    <property type="term" value="P:regulation of cytoplasmic translational initiation in response to stress"/>
    <property type="evidence" value="ECO:0000314"/>
    <property type="project" value="UniProtKB"/>
</dbReference>
<dbReference type="GO" id="GO:0006446">
    <property type="term" value="P:regulation of translational initiation"/>
    <property type="evidence" value="ECO:0000314"/>
    <property type="project" value="MGI"/>
</dbReference>
<dbReference type="CDD" id="cd23821">
    <property type="entry name" value="RWD_IMPACT"/>
    <property type="match status" value="1"/>
</dbReference>
<dbReference type="FunFam" id="3.10.110.10:FF:000066">
    <property type="entry name" value="IMPACT isoform 1"/>
    <property type="match status" value="1"/>
</dbReference>
<dbReference type="FunFam" id="3.30.230.30:FF:000001">
    <property type="entry name" value="IMPACT isoform 1"/>
    <property type="match status" value="1"/>
</dbReference>
<dbReference type="Gene3D" id="3.30.230.30">
    <property type="entry name" value="Impact, N-terminal domain"/>
    <property type="match status" value="1"/>
</dbReference>
<dbReference type="Gene3D" id="3.10.110.10">
    <property type="entry name" value="Ubiquitin Conjugating Enzyme"/>
    <property type="match status" value="1"/>
</dbReference>
<dbReference type="InterPro" id="IPR023582">
    <property type="entry name" value="Impact"/>
</dbReference>
<dbReference type="InterPro" id="IPR001498">
    <property type="entry name" value="Impact_N"/>
</dbReference>
<dbReference type="InterPro" id="IPR036956">
    <property type="entry name" value="Impact_N_sf"/>
</dbReference>
<dbReference type="InterPro" id="IPR020568">
    <property type="entry name" value="Ribosomal_Su5_D2-typ_SF"/>
</dbReference>
<dbReference type="InterPro" id="IPR006575">
    <property type="entry name" value="RWD_dom"/>
</dbReference>
<dbReference type="InterPro" id="IPR016135">
    <property type="entry name" value="UBQ-conjugating_enzyme/RWD"/>
</dbReference>
<dbReference type="InterPro" id="IPR020569">
    <property type="entry name" value="UPF0029_Impact_CS"/>
</dbReference>
<dbReference type="PANTHER" id="PTHR16301">
    <property type="entry name" value="IMPACT-RELATED"/>
    <property type="match status" value="1"/>
</dbReference>
<dbReference type="PANTHER" id="PTHR16301:SF25">
    <property type="entry name" value="PROTEIN IMPACT"/>
    <property type="match status" value="1"/>
</dbReference>
<dbReference type="Pfam" id="PF05773">
    <property type="entry name" value="RWD"/>
    <property type="match status" value="1"/>
</dbReference>
<dbReference type="Pfam" id="PF01205">
    <property type="entry name" value="UPF0029"/>
    <property type="match status" value="1"/>
</dbReference>
<dbReference type="SMART" id="SM00591">
    <property type="entry name" value="RWD"/>
    <property type="match status" value="1"/>
</dbReference>
<dbReference type="SUPFAM" id="SSF54211">
    <property type="entry name" value="Ribosomal protein S5 domain 2-like"/>
    <property type="match status" value="1"/>
</dbReference>
<dbReference type="SUPFAM" id="SSF54495">
    <property type="entry name" value="UBC-like"/>
    <property type="match status" value="1"/>
</dbReference>
<dbReference type="PROSITE" id="PS50908">
    <property type="entry name" value="RWD"/>
    <property type="match status" value="1"/>
</dbReference>
<dbReference type="PROSITE" id="PS00910">
    <property type="entry name" value="UPF0029"/>
    <property type="match status" value="1"/>
</dbReference>
<organism>
    <name type="scientific">Mus musculus</name>
    <name type="common">Mouse</name>
    <dbReference type="NCBI Taxonomy" id="10090"/>
    <lineage>
        <taxon>Eukaryota</taxon>
        <taxon>Metazoa</taxon>
        <taxon>Chordata</taxon>
        <taxon>Craniata</taxon>
        <taxon>Vertebrata</taxon>
        <taxon>Euteleostomi</taxon>
        <taxon>Mammalia</taxon>
        <taxon>Eutheria</taxon>
        <taxon>Euarchontoglires</taxon>
        <taxon>Glires</taxon>
        <taxon>Rodentia</taxon>
        <taxon>Myomorpha</taxon>
        <taxon>Muroidea</taxon>
        <taxon>Muridae</taxon>
        <taxon>Murinae</taxon>
        <taxon>Mus</taxon>
        <taxon>Mus</taxon>
    </lineage>
</organism>
<evidence type="ECO:0000255" key="1">
    <source>
        <dbReference type="PROSITE-ProRule" id="PRU00179"/>
    </source>
</evidence>
<evidence type="ECO:0000256" key="2">
    <source>
        <dbReference type="SAM" id="MobiDB-lite"/>
    </source>
</evidence>
<evidence type="ECO:0000269" key="3">
    <source>
    </source>
</evidence>
<evidence type="ECO:0000269" key="4">
    <source>
    </source>
</evidence>
<evidence type="ECO:0000269" key="5">
    <source>
    </source>
</evidence>
<evidence type="ECO:0000269" key="6">
    <source>
    </source>
</evidence>
<evidence type="ECO:0000269" key="7">
    <source>
    </source>
</evidence>
<evidence type="ECO:0000269" key="8">
    <source>
    </source>
</evidence>
<evidence type="ECO:0000305" key="9"/>
<evidence type="ECO:0000305" key="10">
    <source>
    </source>
</evidence>
<evidence type="ECO:0007744" key="11">
    <source>
    </source>
</evidence>
<evidence type="ECO:0007744" key="12">
    <source>
    </source>
</evidence>